<dbReference type="EMBL" id="AE000516">
    <property type="protein sequence ID" value="AAK47853.1"/>
    <property type="molecule type" value="Genomic_DNA"/>
</dbReference>
<dbReference type="PIR" id="D70736">
    <property type="entry name" value="D70736"/>
</dbReference>
<dbReference type="SMR" id="P9WF22"/>
<dbReference type="KEGG" id="mtc:MT3515"/>
<dbReference type="PATRIC" id="fig|83331.31.peg.3773"/>
<dbReference type="HOGENOM" id="CLU_163140_2_2_11"/>
<dbReference type="Proteomes" id="UP000001020">
    <property type="component" value="Chromosome"/>
</dbReference>
<dbReference type="GO" id="GO:0097351">
    <property type="term" value="F:toxin sequestering activity"/>
    <property type="evidence" value="ECO:0007669"/>
    <property type="project" value="TreeGrafter"/>
</dbReference>
<dbReference type="FunFam" id="3.40.1620.10:FF:000002">
    <property type="entry name" value="Antitoxin"/>
    <property type="match status" value="1"/>
</dbReference>
<dbReference type="Gene3D" id="3.40.1620.10">
    <property type="entry name" value="YefM-like domain"/>
    <property type="match status" value="1"/>
</dbReference>
<dbReference type="InterPro" id="IPR006442">
    <property type="entry name" value="Antitoxin_Phd/YefM"/>
</dbReference>
<dbReference type="InterPro" id="IPR051416">
    <property type="entry name" value="phD-YefM_TA_antitoxins"/>
</dbReference>
<dbReference type="InterPro" id="IPR036165">
    <property type="entry name" value="YefM-like_sf"/>
</dbReference>
<dbReference type="NCBIfam" id="TIGR01552">
    <property type="entry name" value="phd_fam"/>
    <property type="match status" value="1"/>
</dbReference>
<dbReference type="PANTHER" id="PTHR35377:SF5">
    <property type="entry name" value="ANTITOXIN VAPB46"/>
    <property type="match status" value="1"/>
</dbReference>
<dbReference type="PANTHER" id="PTHR35377">
    <property type="entry name" value="ANTITOXIN VAPB49-RELATED-RELATED"/>
    <property type="match status" value="1"/>
</dbReference>
<dbReference type="Pfam" id="PF02604">
    <property type="entry name" value="PhdYeFM_antitox"/>
    <property type="match status" value="1"/>
</dbReference>
<dbReference type="SUPFAM" id="SSF143120">
    <property type="entry name" value="YefM-like"/>
    <property type="match status" value="1"/>
</dbReference>
<comment type="function">
    <text>Antitoxin component of a type II toxin-antitoxin (TA) system.</text>
</comment>
<comment type="similarity">
    <text evidence="1">Belongs to the phD/YefM antitoxin family.</text>
</comment>
<accession>P9WF22</accession>
<accession>L0TCN9</accession>
<accession>P65077</accession>
<accession>Q50718</accession>
<name>VPB47_MYCTO</name>
<reference key="1">
    <citation type="journal article" date="2002" name="J. Bacteriol.">
        <title>Whole-genome comparison of Mycobacterium tuberculosis clinical and laboratory strains.</title>
        <authorList>
            <person name="Fleischmann R.D."/>
            <person name="Alland D."/>
            <person name="Eisen J.A."/>
            <person name="Carpenter L."/>
            <person name="White O."/>
            <person name="Peterson J.D."/>
            <person name="DeBoy R.T."/>
            <person name="Dodson R.J."/>
            <person name="Gwinn M.L."/>
            <person name="Haft D.H."/>
            <person name="Hickey E.K."/>
            <person name="Kolonay J.F."/>
            <person name="Nelson W.C."/>
            <person name="Umayam L.A."/>
            <person name="Ermolaeva M.D."/>
            <person name="Salzberg S.L."/>
            <person name="Delcher A."/>
            <person name="Utterback T.R."/>
            <person name="Weidman J.F."/>
            <person name="Khouri H.M."/>
            <person name="Gill J."/>
            <person name="Mikula A."/>
            <person name="Bishai W."/>
            <person name="Jacobs W.R. Jr."/>
            <person name="Venter J.C."/>
            <person name="Fraser C.M."/>
        </authorList>
    </citation>
    <scope>NUCLEOTIDE SEQUENCE [LARGE SCALE GENOMIC DNA]</scope>
    <source>
        <strain>CDC 1551 / Oshkosh</strain>
    </source>
</reference>
<feature type="chain" id="PRO_0000428614" description="Antitoxin VapB47">
    <location>
        <begin position="1"/>
        <end position="99"/>
    </location>
</feature>
<protein>
    <recommendedName>
        <fullName>Antitoxin VapB47</fullName>
    </recommendedName>
</protein>
<gene>
    <name type="primary">vapB47</name>
    <name type="ordered locus">MT3515</name>
</gene>
<keyword id="KW-1185">Reference proteome</keyword>
<keyword id="KW-1277">Toxin-antitoxin system</keyword>
<sequence>MRATVGLVEAIGIRELRQHASRYLARVEAGEELGVTNKGRLVARLIPVQAAERSREALIESGVLIPARRPQNLLDVTAEPARGRKRTLSDVLNEMRDEQ</sequence>
<proteinExistence type="inferred from homology"/>
<evidence type="ECO:0000305" key="1"/>
<organism>
    <name type="scientific">Mycobacterium tuberculosis (strain CDC 1551 / Oshkosh)</name>
    <dbReference type="NCBI Taxonomy" id="83331"/>
    <lineage>
        <taxon>Bacteria</taxon>
        <taxon>Bacillati</taxon>
        <taxon>Actinomycetota</taxon>
        <taxon>Actinomycetes</taxon>
        <taxon>Mycobacteriales</taxon>
        <taxon>Mycobacteriaceae</taxon>
        <taxon>Mycobacterium</taxon>
        <taxon>Mycobacterium tuberculosis complex</taxon>
    </lineage>
</organism>